<gene>
    <name type="primary">CPK18</name>
    <name type="ordered locus">At4g36070</name>
    <name type="ORF">T19K4.200</name>
</gene>
<sequence>MGLCFSSPKATRRGTGSRNPNPDSPTQGKASEKVSNKNKKNTKKIQLRHQGGIPYGKRIDFGYAKDFDNRYTIGKLLGHGQFGFTYVATDNNNGNRVAVKRIDKAKMTQPIEVEDVKREVKILQALGGHENVVGFHNAFEDKTYIYIVMELCDGGELLDRILAKKDSRYTEKDAAVVVRQMLKVAAECHLRGLVHRDMKPENFLFKSTEEGSSLKATDFGLSDFIKPGVKFQDIVGSAYYVAPEVLKRRSGPESDVWSIGVITYILLCGRRPFWDKTQDGIFNEVMRKKPDFREVPWPTISNGAKDFVKKLLVKEPRARLTAAQALSHSWVKEGGEASEVPIDISVLNNMRQFVKFSRLKQIALRALAKTINEDELDDLRDQFDAIDIDKNGSISLEEMRQALAKDVPWKLKDARVAEILQANDSNTDGLVDFTEFVVAALHVNQLEEHDSEKWQQRSRAAFDKFDIDGDGFITPEELRLQTGLKGSIEPLLEEADVDEDGRISINEFRRLLRSASLKSKNVKSPPGYQLSQKM</sequence>
<proteinExistence type="evidence at transcript level"/>
<reference key="1">
    <citation type="journal article" date="1999" name="Nature">
        <title>Sequence and analysis of chromosome 4 of the plant Arabidopsis thaliana.</title>
        <authorList>
            <person name="Mayer K.F.X."/>
            <person name="Schueller C."/>
            <person name="Wambutt R."/>
            <person name="Murphy G."/>
            <person name="Volckaert G."/>
            <person name="Pohl T."/>
            <person name="Duesterhoeft A."/>
            <person name="Stiekema W."/>
            <person name="Entian K.-D."/>
            <person name="Terryn N."/>
            <person name="Harris B."/>
            <person name="Ansorge W."/>
            <person name="Brandt P."/>
            <person name="Grivell L.A."/>
            <person name="Rieger M."/>
            <person name="Weichselgartner M."/>
            <person name="de Simone V."/>
            <person name="Obermaier B."/>
            <person name="Mache R."/>
            <person name="Mueller M."/>
            <person name="Kreis M."/>
            <person name="Delseny M."/>
            <person name="Puigdomenech P."/>
            <person name="Watson M."/>
            <person name="Schmidtheini T."/>
            <person name="Reichert B."/>
            <person name="Portetelle D."/>
            <person name="Perez-Alonso M."/>
            <person name="Boutry M."/>
            <person name="Bancroft I."/>
            <person name="Vos P."/>
            <person name="Hoheisel J."/>
            <person name="Zimmermann W."/>
            <person name="Wedler H."/>
            <person name="Ridley P."/>
            <person name="Langham S.-A."/>
            <person name="McCullagh B."/>
            <person name="Bilham L."/>
            <person name="Robben J."/>
            <person name="van der Schueren J."/>
            <person name="Grymonprez B."/>
            <person name="Chuang Y.-J."/>
            <person name="Vandenbussche F."/>
            <person name="Braeken M."/>
            <person name="Weltjens I."/>
            <person name="Voet M."/>
            <person name="Bastiaens I."/>
            <person name="Aert R."/>
            <person name="Defoor E."/>
            <person name="Weitzenegger T."/>
            <person name="Bothe G."/>
            <person name="Ramsperger U."/>
            <person name="Hilbert H."/>
            <person name="Braun M."/>
            <person name="Holzer E."/>
            <person name="Brandt A."/>
            <person name="Peters S."/>
            <person name="van Staveren M."/>
            <person name="Dirkse W."/>
            <person name="Mooijman P."/>
            <person name="Klein Lankhorst R."/>
            <person name="Rose M."/>
            <person name="Hauf J."/>
            <person name="Koetter P."/>
            <person name="Berneiser S."/>
            <person name="Hempel S."/>
            <person name="Feldpausch M."/>
            <person name="Lamberth S."/>
            <person name="Van den Daele H."/>
            <person name="De Keyser A."/>
            <person name="Buysshaert C."/>
            <person name="Gielen J."/>
            <person name="Villarroel R."/>
            <person name="De Clercq R."/>
            <person name="van Montagu M."/>
            <person name="Rogers J."/>
            <person name="Cronin A."/>
            <person name="Quail M.A."/>
            <person name="Bray-Allen S."/>
            <person name="Clark L."/>
            <person name="Doggett J."/>
            <person name="Hall S."/>
            <person name="Kay M."/>
            <person name="Lennard N."/>
            <person name="McLay K."/>
            <person name="Mayes R."/>
            <person name="Pettett A."/>
            <person name="Rajandream M.A."/>
            <person name="Lyne M."/>
            <person name="Benes V."/>
            <person name="Rechmann S."/>
            <person name="Borkova D."/>
            <person name="Bloecker H."/>
            <person name="Scharfe M."/>
            <person name="Grimm M."/>
            <person name="Loehnert T.-H."/>
            <person name="Dose S."/>
            <person name="de Haan M."/>
            <person name="Maarse A.C."/>
            <person name="Schaefer M."/>
            <person name="Mueller-Auer S."/>
            <person name="Gabel C."/>
            <person name="Fuchs M."/>
            <person name="Fartmann B."/>
            <person name="Granderath K."/>
            <person name="Dauner D."/>
            <person name="Herzl A."/>
            <person name="Neumann S."/>
            <person name="Argiriou A."/>
            <person name="Vitale D."/>
            <person name="Liguori R."/>
            <person name="Piravandi E."/>
            <person name="Massenet O."/>
            <person name="Quigley F."/>
            <person name="Clabauld G."/>
            <person name="Muendlein A."/>
            <person name="Felber R."/>
            <person name="Schnabl S."/>
            <person name="Hiller R."/>
            <person name="Schmidt W."/>
            <person name="Lecharny A."/>
            <person name="Aubourg S."/>
            <person name="Chefdor F."/>
            <person name="Cooke R."/>
            <person name="Berger C."/>
            <person name="Monfort A."/>
            <person name="Casacuberta E."/>
            <person name="Gibbons T."/>
            <person name="Weber N."/>
            <person name="Vandenbol M."/>
            <person name="Bargues M."/>
            <person name="Terol J."/>
            <person name="Torres A."/>
            <person name="Perez-Perez A."/>
            <person name="Purnelle B."/>
            <person name="Bent E."/>
            <person name="Johnson S."/>
            <person name="Tacon D."/>
            <person name="Jesse T."/>
            <person name="Heijnen L."/>
            <person name="Schwarz S."/>
            <person name="Scholler P."/>
            <person name="Heber S."/>
            <person name="Francs P."/>
            <person name="Bielke C."/>
            <person name="Frishman D."/>
            <person name="Haase D."/>
            <person name="Lemcke K."/>
            <person name="Mewes H.-W."/>
            <person name="Stocker S."/>
            <person name="Zaccaria P."/>
            <person name="Bevan M."/>
            <person name="Wilson R.K."/>
            <person name="de la Bastide M."/>
            <person name="Habermann K."/>
            <person name="Parnell L."/>
            <person name="Dedhia N."/>
            <person name="Gnoj L."/>
            <person name="Schutz K."/>
            <person name="Huang E."/>
            <person name="Spiegel L."/>
            <person name="Sekhon M."/>
            <person name="Murray J."/>
            <person name="Sheet P."/>
            <person name="Cordes M."/>
            <person name="Abu-Threideh J."/>
            <person name="Stoneking T."/>
            <person name="Kalicki J."/>
            <person name="Graves T."/>
            <person name="Harmon G."/>
            <person name="Edwards J."/>
            <person name="Latreille P."/>
            <person name="Courtney L."/>
            <person name="Cloud J."/>
            <person name="Abbott A."/>
            <person name="Scott K."/>
            <person name="Johnson D."/>
            <person name="Minx P."/>
            <person name="Bentley D."/>
            <person name="Fulton B."/>
            <person name="Miller N."/>
            <person name="Greco T."/>
            <person name="Kemp K."/>
            <person name="Kramer J."/>
            <person name="Fulton L."/>
            <person name="Mardis E."/>
            <person name="Dante M."/>
            <person name="Pepin K."/>
            <person name="Hillier L.W."/>
            <person name="Nelson J."/>
            <person name="Spieth J."/>
            <person name="Ryan E."/>
            <person name="Andrews S."/>
            <person name="Geisel C."/>
            <person name="Layman D."/>
            <person name="Du H."/>
            <person name="Ali J."/>
            <person name="Berghoff A."/>
            <person name="Jones K."/>
            <person name="Drone K."/>
            <person name="Cotton M."/>
            <person name="Joshu C."/>
            <person name="Antonoiu B."/>
            <person name="Zidanic M."/>
            <person name="Strong C."/>
            <person name="Sun H."/>
            <person name="Lamar B."/>
            <person name="Yordan C."/>
            <person name="Ma P."/>
            <person name="Zhong J."/>
            <person name="Preston R."/>
            <person name="Vil D."/>
            <person name="Shekher M."/>
            <person name="Matero A."/>
            <person name="Shah R."/>
            <person name="Swaby I.K."/>
            <person name="O'Shaughnessy A."/>
            <person name="Rodriguez M."/>
            <person name="Hoffman J."/>
            <person name="Till S."/>
            <person name="Granat S."/>
            <person name="Shohdy N."/>
            <person name="Hasegawa A."/>
            <person name="Hameed A."/>
            <person name="Lodhi M."/>
            <person name="Johnson A."/>
            <person name="Chen E."/>
            <person name="Marra M.A."/>
            <person name="Martienssen R."/>
            <person name="McCombie W.R."/>
        </authorList>
    </citation>
    <scope>NUCLEOTIDE SEQUENCE [LARGE SCALE GENOMIC DNA]</scope>
    <source>
        <strain>cv. Columbia</strain>
    </source>
</reference>
<reference key="2">
    <citation type="journal article" date="2017" name="Plant J.">
        <title>Araport11: a complete reannotation of the Arabidopsis thaliana reference genome.</title>
        <authorList>
            <person name="Cheng C.Y."/>
            <person name="Krishnakumar V."/>
            <person name="Chan A.P."/>
            <person name="Thibaud-Nissen F."/>
            <person name="Schobel S."/>
            <person name="Town C.D."/>
        </authorList>
    </citation>
    <scope>GENOME REANNOTATION</scope>
    <source>
        <strain>cv. Columbia</strain>
    </source>
</reference>
<reference key="3">
    <citation type="journal article" date="2006" name="Plant Biotechnol. J.">
        <title>Simultaneous high-throughput recombinational cloning of open reading frames in closed and open configurations.</title>
        <authorList>
            <person name="Underwood B.A."/>
            <person name="Vanderhaeghen R."/>
            <person name="Whitford R."/>
            <person name="Town C.D."/>
            <person name="Hilson P."/>
        </authorList>
    </citation>
    <scope>NUCLEOTIDE SEQUENCE [LARGE SCALE MRNA]</scope>
    <source>
        <strain>cv. Columbia</strain>
    </source>
</reference>
<reference key="4">
    <citation type="journal article" date="2001" name="New Phytol.">
        <title>The CDPK superfamily of protein kinases.</title>
        <authorList>
            <person name="Harmon A.C."/>
            <person name="Gribskov M."/>
            <person name="Gubrium E."/>
            <person name="Harper J.F."/>
        </authorList>
    </citation>
    <scope>GENE FAMILY</scope>
    <scope>NOMENCLATURE</scope>
</reference>
<reference key="5">
    <citation type="journal article" date="2002" name="Plant Physiol.">
        <title>Calcium signaling through protein kinases. The Arabidopsis calcium-dependent protein kinase gene family.</title>
        <authorList>
            <person name="Cheng S.-H."/>
            <person name="Willmann M.R."/>
            <person name="Chen H.-C."/>
            <person name="Sheen J."/>
        </authorList>
    </citation>
    <scope>GENE FAMILY</scope>
    <scope>NOMENCLATURE</scope>
</reference>
<reference key="6">
    <citation type="journal article" date="2003" name="Plant Physiol.">
        <title>The Arabidopsis CDPK-SnRK superfamily of protein kinases.</title>
        <authorList>
            <person name="Hrabak E.M."/>
            <person name="Chan C.W.M."/>
            <person name="Gribskov M."/>
            <person name="Harper J.F."/>
            <person name="Choi J.H."/>
            <person name="Halford N."/>
            <person name="Kudla J."/>
            <person name="Luan S."/>
            <person name="Nimmo H.G."/>
            <person name="Sussman M.R."/>
            <person name="Thomas M."/>
            <person name="Walker-Simmons K."/>
            <person name="Zhu J.-K."/>
            <person name="Harmon A.C."/>
        </authorList>
    </citation>
    <scope>GENE FAMILY</scope>
    <scope>NOMENCLATURE</scope>
</reference>
<dbReference type="EC" id="2.7.11.1"/>
<dbReference type="EMBL" id="AL022373">
    <property type="protein sequence ID" value="CAA18501.1"/>
    <property type="status" value="ALT_SEQ"/>
    <property type="molecule type" value="Genomic_DNA"/>
</dbReference>
<dbReference type="EMBL" id="AL161588">
    <property type="protein sequence ID" value="CAB81516.1"/>
    <property type="status" value="ALT_SEQ"/>
    <property type="molecule type" value="Genomic_DNA"/>
</dbReference>
<dbReference type="EMBL" id="CP002687">
    <property type="protein sequence ID" value="AEE86610.1"/>
    <property type="molecule type" value="Genomic_DNA"/>
</dbReference>
<dbReference type="EMBL" id="DQ446901">
    <property type="protein sequence ID" value="ABE66116.1"/>
    <property type="molecule type" value="mRNA"/>
</dbReference>
<dbReference type="PIR" id="T05500">
    <property type="entry name" value="T05500"/>
</dbReference>
<dbReference type="RefSeq" id="NP_195331.2">
    <molecule id="Q1PE17-1"/>
    <property type="nucleotide sequence ID" value="NM_119774.3"/>
</dbReference>
<dbReference type="SMR" id="Q1PE17"/>
<dbReference type="FunCoup" id="Q1PE17">
    <property type="interactions" value="215"/>
</dbReference>
<dbReference type="STRING" id="3702.Q1PE17"/>
<dbReference type="iPTMnet" id="Q1PE17"/>
<dbReference type="PaxDb" id="3702-AT4G36070.2"/>
<dbReference type="EnsemblPlants" id="AT4G36070.1">
    <molecule id="Q1PE17-1"/>
    <property type="protein sequence ID" value="AT4G36070.1"/>
    <property type="gene ID" value="AT4G36070"/>
</dbReference>
<dbReference type="GeneID" id="829763"/>
<dbReference type="Gramene" id="AT4G36070.1">
    <molecule id="Q1PE17-1"/>
    <property type="protein sequence ID" value="AT4G36070.1"/>
    <property type="gene ID" value="AT4G36070"/>
</dbReference>
<dbReference type="KEGG" id="ath:AT4G36070"/>
<dbReference type="Araport" id="AT4G36070"/>
<dbReference type="TAIR" id="AT4G36070">
    <property type="gene designation" value="CPK18"/>
</dbReference>
<dbReference type="eggNOG" id="KOG0032">
    <property type="taxonomic scope" value="Eukaryota"/>
</dbReference>
<dbReference type="HOGENOM" id="CLU_000288_37_3_1"/>
<dbReference type="InParanoid" id="Q1PE17"/>
<dbReference type="OMA" id="GMKFQDI"/>
<dbReference type="PhylomeDB" id="Q1PE17"/>
<dbReference type="PRO" id="PR:Q1PE17"/>
<dbReference type="Proteomes" id="UP000006548">
    <property type="component" value="Chromosome 4"/>
</dbReference>
<dbReference type="ExpressionAtlas" id="Q1PE17">
    <property type="expression patterns" value="baseline and differential"/>
</dbReference>
<dbReference type="GO" id="GO:0016020">
    <property type="term" value="C:membrane"/>
    <property type="evidence" value="ECO:0007669"/>
    <property type="project" value="UniProtKB-SubCell"/>
</dbReference>
<dbReference type="GO" id="GO:0005524">
    <property type="term" value="F:ATP binding"/>
    <property type="evidence" value="ECO:0007669"/>
    <property type="project" value="UniProtKB-KW"/>
</dbReference>
<dbReference type="GO" id="GO:0005509">
    <property type="term" value="F:calcium ion binding"/>
    <property type="evidence" value="ECO:0007669"/>
    <property type="project" value="InterPro"/>
</dbReference>
<dbReference type="GO" id="GO:0106310">
    <property type="term" value="F:protein serine kinase activity"/>
    <property type="evidence" value="ECO:0007669"/>
    <property type="project" value="RHEA"/>
</dbReference>
<dbReference type="GO" id="GO:0004674">
    <property type="term" value="F:protein serine/threonine kinase activity"/>
    <property type="evidence" value="ECO:0007669"/>
    <property type="project" value="UniProtKB-KW"/>
</dbReference>
<dbReference type="CDD" id="cd00051">
    <property type="entry name" value="EFh"/>
    <property type="match status" value="1"/>
</dbReference>
<dbReference type="CDD" id="cd05117">
    <property type="entry name" value="STKc_CAMK"/>
    <property type="match status" value="1"/>
</dbReference>
<dbReference type="FunFam" id="1.10.238.10:FF:000432">
    <property type="entry name" value="Calcium-dependent protein kinase 18"/>
    <property type="match status" value="1"/>
</dbReference>
<dbReference type="FunFam" id="1.10.510.10:FF:000225">
    <property type="entry name" value="calcium-dependent protein kinase 28-like"/>
    <property type="match status" value="1"/>
</dbReference>
<dbReference type="FunFam" id="3.30.200.20:FF:000101">
    <property type="entry name" value="CDPK-related kinase 1"/>
    <property type="match status" value="1"/>
</dbReference>
<dbReference type="Gene3D" id="1.10.238.10">
    <property type="entry name" value="EF-hand"/>
    <property type="match status" value="1"/>
</dbReference>
<dbReference type="Gene3D" id="3.30.200.20">
    <property type="entry name" value="Phosphorylase Kinase, domain 1"/>
    <property type="match status" value="1"/>
</dbReference>
<dbReference type="Gene3D" id="1.10.510.10">
    <property type="entry name" value="Transferase(Phosphotransferase) domain 1"/>
    <property type="match status" value="1"/>
</dbReference>
<dbReference type="InterPro" id="IPR050205">
    <property type="entry name" value="CDPK_Ser/Thr_kinases"/>
</dbReference>
<dbReference type="InterPro" id="IPR011992">
    <property type="entry name" value="EF-hand-dom_pair"/>
</dbReference>
<dbReference type="InterPro" id="IPR018247">
    <property type="entry name" value="EF_Hand_1_Ca_BS"/>
</dbReference>
<dbReference type="InterPro" id="IPR002048">
    <property type="entry name" value="EF_hand_dom"/>
</dbReference>
<dbReference type="InterPro" id="IPR011009">
    <property type="entry name" value="Kinase-like_dom_sf"/>
</dbReference>
<dbReference type="InterPro" id="IPR000719">
    <property type="entry name" value="Prot_kinase_dom"/>
</dbReference>
<dbReference type="InterPro" id="IPR017441">
    <property type="entry name" value="Protein_kinase_ATP_BS"/>
</dbReference>
<dbReference type="InterPro" id="IPR008271">
    <property type="entry name" value="Ser/Thr_kinase_AS"/>
</dbReference>
<dbReference type="PANTHER" id="PTHR24349">
    <property type="entry name" value="SERINE/THREONINE-PROTEIN KINASE"/>
    <property type="match status" value="1"/>
</dbReference>
<dbReference type="Pfam" id="PF13499">
    <property type="entry name" value="EF-hand_7"/>
    <property type="match status" value="2"/>
</dbReference>
<dbReference type="Pfam" id="PF00069">
    <property type="entry name" value="Pkinase"/>
    <property type="match status" value="1"/>
</dbReference>
<dbReference type="SMART" id="SM00054">
    <property type="entry name" value="EFh"/>
    <property type="match status" value="4"/>
</dbReference>
<dbReference type="SMART" id="SM00220">
    <property type="entry name" value="S_TKc"/>
    <property type="match status" value="1"/>
</dbReference>
<dbReference type="SUPFAM" id="SSF47473">
    <property type="entry name" value="EF-hand"/>
    <property type="match status" value="1"/>
</dbReference>
<dbReference type="SUPFAM" id="SSF56112">
    <property type="entry name" value="Protein kinase-like (PK-like)"/>
    <property type="match status" value="1"/>
</dbReference>
<dbReference type="PROSITE" id="PS00018">
    <property type="entry name" value="EF_HAND_1"/>
    <property type="match status" value="4"/>
</dbReference>
<dbReference type="PROSITE" id="PS50222">
    <property type="entry name" value="EF_HAND_2"/>
    <property type="match status" value="4"/>
</dbReference>
<dbReference type="PROSITE" id="PS00107">
    <property type="entry name" value="PROTEIN_KINASE_ATP"/>
    <property type="match status" value="1"/>
</dbReference>
<dbReference type="PROSITE" id="PS50011">
    <property type="entry name" value="PROTEIN_KINASE_DOM"/>
    <property type="match status" value="1"/>
</dbReference>
<dbReference type="PROSITE" id="PS00108">
    <property type="entry name" value="PROTEIN_KINASE_ST"/>
    <property type="match status" value="1"/>
</dbReference>
<comment type="function">
    <text>May play a role in signal transduction pathways that involve calcium as a second messenger.</text>
</comment>
<comment type="catalytic activity">
    <reaction>
        <text>L-seryl-[protein] + ATP = O-phospho-L-seryl-[protein] + ADP + H(+)</text>
        <dbReference type="Rhea" id="RHEA:17989"/>
        <dbReference type="Rhea" id="RHEA-COMP:9863"/>
        <dbReference type="Rhea" id="RHEA-COMP:11604"/>
        <dbReference type="ChEBI" id="CHEBI:15378"/>
        <dbReference type="ChEBI" id="CHEBI:29999"/>
        <dbReference type="ChEBI" id="CHEBI:30616"/>
        <dbReference type="ChEBI" id="CHEBI:83421"/>
        <dbReference type="ChEBI" id="CHEBI:456216"/>
        <dbReference type="EC" id="2.7.11.1"/>
    </reaction>
</comment>
<comment type="catalytic activity">
    <reaction>
        <text>L-threonyl-[protein] + ATP = O-phospho-L-threonyl-[protein] + ADP + H(+)</text>
        <dbReference type="Rhea" id="RHEA:46608"/>
        <dbReference type="Rhea" id="RHEA-COMP:11060"/>
        <dbReference type="Rhea" id="RHEA-COMP:11605"/>
        <dbReference type="ChEBI" id="CHEBI:15378"/>
        <dbReference type="ChEBI" id="CHEBI:30013"/>
        <dbReference type="ChEBI" id="CHEBI:30616"/>
        <dbReference type="ChEBI" id="CHEBI:61977"/>
        <dbReference type="ChEBI" id="CHEBI:456216"/>
        <dbReference type="EC" id="2.7.11.1"/>
    </reaction>
</comment>
<comment type="activity regulation">
    <text evidence="1">Activated by calcium. Autophosphorylation may play an important role in the regulation of the kinase activity (By similarity).</text>
</comment>
<comment type="subcellular location">
    <subcellularLocation>
        <location evidence="8">Membrane</location>
        <topology evidence="8">Lipid-anchor</topology>
    </subcellularLocation>
</comment>
<comment type="alternative products">
    <event type="alternative splicing"/>
    <isoform>
        <id>Q1PE17-1</id>
        <name>1</name>
        <sequence type="displayed"/>
    </isoform>
    <text>A number of isoforms are produced. According to EST sequences.</text>
</comment>
<comment type="domain">
    <text evidence="1">There are 3 contiguous domains conserved in the CDPK subfamily: a kinase domain, an autoinhibitory (junction) domain and a calmodulin-like domain. The autoinhibitory domain (337-367) inactivates kinase activity under calcium-free conditions (By similarity).</text>
</comment>
<comment type="similarity">
    <text evidence="4">Belongs to the protein kinase superfamily. Ser/Thr protein kinase family. CDPK subfamily.</text>
</comment>
<comment type="sequence caution" evidence="8">
    <conflict type="erroneous gene model prediction">
        <sequence resource="EMBL-CDS" id="CAA18501"/>
    </conflict>
</comment>
<comment type="sequence caution" evidence="8">
    <conflict type="erroneous gene model prediction">
        <sequence resource="EMBL-CDS" id="CAB81516"/>
    </conflict>
</comment>
<accession>Q1PE17</accession>
<accession>O65644</accession>
<evidence type="ECO:0000250" key="1"/>
<evidence type="ECO:0000250" key="2">
    <source>
        <dbReference type="UniProtKB" id="Q9FKW4"/>
    </source>
</evidence>
<evidence type="ECO:0000255" key="3"/>
<evidence type="ECO:0000255" key="4">
    <source>
        <dbReference type="PROSITE-ProRule" id="PRU00159"/>
    </source>
</evidence>
<evidence type="ECO:0000255" key="5">
    <source>
        <dbReference type="PROSITE-ProRule" id="PRU00448"/>
    </source>
</evidence>
<evidence type="ECO:0000255" key="6">
    <source>
        <dbReference type="PROSITE-ProRule" id="PRU10027"/>
    </source>
</evidence>
<evidence type="ECO:0000256" key="7">
    <source>
        <dbReference type="SAM" id="MobiDB-lite"/>
    </source>
</evidence>
<evidence type="ECO:0000305" key="8"/>
<name>CDPKI_ARATH</name>
<protein>
    <recommendedName>
        <fullName>Calcium-dependent protein kinase 18</fullName>
        <ecNumber>2.7.11.1</ecNumber>
    </recommendedName>
</protein>
<keyword id="KW-0025">Alternative splicing</keyword>
<keyword id="KW-0067">ATP-binding</keyword>
<keyword id="KW-0106">Calcium</keyword>
<keyword id="KW-0418">Kinase</keyword>
<keyword id="KW-0449">Lipoprotein</keyword>
<keyword id="KW-0472">Membrane</keyword>
<keyword id="KW-0479">Metal-binding</keyword>
<keyword id="KW-0519">Myristate</keyword>
<keyword id="KW-0547">Nucleotide-binding</keyword>
<keyword id="KW-0597">Phosphoprotein</keyword>
<keyword id="KW-1185">Reference proteome</keyword>
<keyword id="KW-0677">Repeat</keyword>
<keyword id="KW-0723">Serine/threonine-protein kinase</keyword>
<keyword id="KW-0808">Transferase</keyword>
<organism>
    <name type="scientific">Arabidopsis thaliana</name>
    <name type="common">Mouse-ear cress</name>
    <dbReference type="NCBI Taxonomy" id="3702"/>
    <lineage>
        <taxon>Eukaryota</taxon>
        <taxon>Viridiplantae</taxon>
        <taxon>Streptophyta</taxon>
        <taxon>Embryophyta</taxon>
        <taxon>Tracheophyta</taxon>
        <taxon>Spermatophyta</taxon>
        <taxon>Magnoliopsida</taxon>
        <taxon>eudicotyledons</taxon>
        <taxon>Gunneridae</taxon>
        <taxon>Pentapetalae</taxon>
        <taxon>rosids</taxon>
        <taxon>malvids</taxon>
        <taxon>Brassicales</taxon>
        <taxon>Brassicaceae</taxon>
        <taxon>Camelineae</taxon>
        <taxon>Arabidopsis</taxon>
    </lineage>
</organism>
<feature type="initiator methionine" description="Removed" evidence="3">
    <location>
        <position position="1"/>
    </location>
</feature>
<feature type="chain" id="PRO_0000363340" description="Calcium-dependent protein kinase 18">
    <location>
        <begin position="2"/>
        <end position="534"/>
    </location>
</feature>
<feature type="domain" description="Protein kinase" evidence="4">
    <location>
        <begin position="71"/>
        <end position="331"/>
    </location>
</feature>
<feature type="domain" description="EF-hand 1" evidence="5">
    <location>
        <begin position="374"/>
        <end position="409"/>
    </location>
</feature>
<feature type="domain" description="EF-hand 2" evidence="5">
    <location>
        <begin position="411"/>
        <end position="446"/>
    </location>
</feature>
<feature type="domain" description="EF-hand 3" evidence="5">
    <location>
        <begin position="453"/>
        <end position="488"/>
    </location>
</feature>
<feature type="domain" description="EF-hand 4" evidence="5">
    <location>
        <begin position="491"/>
        <end position="518"/>
    </location>
</feature>
<feature type="region of interest" description="Disordered" evidence="7">
    <location>
        <begin position="1"/>
        <end position="49"/>
    </location>
</feature>
<feature type="region of interest" description="Autoinhibitory domain" evidence="1">
    <location>
        <begin position="337"/>
        <end position="367"/>
    </location>
</feature>
<feature type="compositionally biased region" description="Polar residues" evidence="7">
    <location>
        <begin position="14"/>
        <end position="29"/>
    </location>
</feature>
<feature type="compositionally biased region" description="Basic residues" evidence="7">
    <location>
        <begin position="36"/>
        <end position="47"/>
    </location>
</feature>
<feature type="active site" description="Proton acceptor" evidence="4 6">
    <location>
        <position position="197"/>
    </location>
</feature>
<feature type="binding site" evidence="4">
    <location>
        <begin position="77"/>
        <end position="85"/>
    </location>
    <ligand>
        <name>ATP</name>
        <dbReference type="ChEBI" id="CHEBI:30616"/>
    </ligand>
</feature>
<feature type="binding site" evidence="4">
    <location>
        <position position="100"/>
    </location>
    <ligand>
        <name>ATP</name>
        <dbReference type="ChEBI" id="CHEBI:30616"/>
    </ligand>
</feature>
<feature type="binding site" evidence="5">
    <location>
        <position position="387"/>
    </location>
    <ligand>
        <name>Ca(2+)</name>
        <dbReference type="ChEBI" id="CHEBI:29108"/>
        <label>1</label>
    </ligand>
</feature>
<feature type="binding site" evidence="5">
    <location>
        <position position="389"/>
    </location>
    <ligand>
        <name>Ca(2+)</name>
        <dbReference type="ChEBI" id="CHEBI:29108"/>
        <label>1</label>
    </ligand>
</feature>
<feature type="binding site" evidence="5">
    <location>
        <position position="391"/>
    </location>
    <ligand>
        <name>Ca(2+)</name>
        <dbReference type="ChEBI" id="CHEBI:29108"/>
        <label>1</label>
    </ligand>
</feature>
<feature type="binding site" evidence="5">
    <location>
        <position position="393"/>
    </location>
    <ligand>
        <name>Ca(2+)</name>
        <dbReference type="ChEBI" id="CHEBI:29108"/>
        <label>1</label>
    </ligand>
</feature>
<feature type="binding site" evidence="5">
    <location>
        <position position="398"/>
    </location>
    <ligand>
        <name>Ca(2+)</name>
        <dbReference type="ChEBI" id="CHEBI:29108"/>
        <label>1</label>
    </ligand>
</feature>
<feature type="binding site" evidence="5">
    <location>
        <position position="424"/>
    </location>
    <ligand>
        <name>Ca(2+)</name>
        <dbReference type="ChEBI" id="CHEBI:29108"/>
        <label>2</label>
    </ligand>
</feature>
<feature type="binding site" evidence="5">
    <location>
        <position position="426"/>
    </location>
    <ligand>
        <name>Ca(2+)</name>
        <dbReference type="ChEBI" id="CHEBI:29108"/>
        <label>2</label>
    </ligand>
</feature>
<feature type="binding site" evidence="5">
    <location>
        <position position="428"/>
    </location>
    <ligand>
        <name>Ca(2+)</name>
        <dbReference type="ChEBI" id="CHEBI:29108"/>
        <label>2</label>
    </ligand>
</feature>
<feature type="binding site" evidence="5">
    <location>
        <position position="435"/>
    </location>
    <ligand>
        <name>Ca(2+)</name>
        <dbReference type="ChEBI" id="CHEBI:29108"/>
        <label>2</label>
    </ligand>
</feature>
<feature type="binding site" evidence="5">
    <location>
        <position position="466"/>
    </location>
    <ligand>
        <name>Ca(2+)</name>
        <dbReference type="ChEBI" id="CHEBI:29108"/>
        <label>3</label>
    </ligand>
</feature>
<feature type="binding site" evidence="5">
    <location>
        <position position="468"/>
    </location>
    <ligand>
        <name>Ca(2+)</name>
        <dbReference type="ChEBI" id="CHEBI:29108"/>
        <label>3</label>
    </ligand>
</feature>
<feature type="binding site" evidence="5">
    <location>
        <position position="470"/>
    </location>
    <ligand>
        <name>Ca(2+)</name>
        <dbReference type="ChEBI" id="CHEBI:29108"/>
        <label>3</label>
    </ligand>
</feature>
<feature type="binding site" evidence="5">
    <location>
        <position position="477"/>
    </location>
    <ligand>
        <name>Ca(2+)</name>
        <dbReference type="ChEBI" id="CHEBI:29108"/>
        <label>3</label>
    </ligand>
</feature>
<feature type="binding site" evidence="5">
    <location>
        <position position="496"/>
    </location>
    <ligand>
        <name>Ca(2+)</name>
        <dbReference type="ChEBI" id="CHEBI:29108"/>
        <label>4</label>
    </ligand>
</feature>
<feature type="binding site" evidence="5">
    <location>
        <position position="498"/>
    </location>
    <ligand>
        <name>Ca(2+)</name>
        <dbReference type="ChEBI" id="CHEBI:29108"/>
        <label>4</label>
    </ligand>
</feature>
<feature type="binding site" evidence="5">
    <location>
        <position position="500"/>
    </location>
    <ligand>
        <name>Ca(2+)</name>
        <dbReference type="ChEBI" id="CHEBI:29108"/>
        <label>4</label>
    </ligand>
</feature>
<feature type="binding site" evidence="5">
    <location>
        <position position="502"/>
    </location>
    <ligand>
        <name>Ca(2+)</name>
        <dbReference type="ChEBI" id="CHEBI:29108"/>
        <label>4</label>
    </ligand>
</feature>
<feature type="binding site" evidence="5">
    <location>
        <position position="507"/>
    </location>
    <ligand>
        <name>Ca(2+)</name>
        <dbReference type="ChEBI" id="CHEBI:29108"/>
        <label>4</label>
    </ligand>
</feature>
<feature type="modified residue" description="Phosphoserine" evidence="2">
    <location>
        <position position="237"/>
    </location>
</feature>
<feature type="modified residue" description="Phosphoserine" evidence="2">
    <location>
        <position position="504"/>
    </location>
</feature>
<feature type="lipid moiety-binding region" description="N-myristoyl glycine" evidence="3">
    <location>
        <position position="2"/>
    </location>
</feature>